<keyword id="KW-0413">Isomerase</keyword>
<keyword id="KW-1185">Reference proteome</keyword>
<keyword id="KW-0819">tRNA processing</keyword>
<organism>
    <name type="scientific">Helicobacter pylori (strain G27)</name>
    <dbReference type="NCBI Taxonomy" id="563041"/>
    <lineage>
        <taxon>Bacteria</taxon>
        <taxon>Pseudomonadati</taxon>
        <taxon>Campylobacterota</taxon>
        <taxon>Epsilonproteobacteria</taxon>
        <taxon>Campylobacterales</taxon>
        <taxon>Helicobacteraceae</taxon>
        <taxon>Helicobacter</taxon>
    </lineage>
</organism>
<protein>
    <recommendedName>
        <fullName evidence="1">tRNA pseudouridine synthase A</fullName>
        <ecNumber evidence="1">5.4.99.12</ecNumber>
    </recommendedName>
    <alternativeName>
        <fullName evidence="1">tRNA pseudouridine(38-40) synthase</fullName>
    </alternativeName>
    <alternativeName>
        <fullName evidence="1">tRNA pseudouridylate synthase I</fullName>
    </alternativeName>
    <alternativeName>
        <fullName evidence="1">tRNA-uridine isomerase I</fullName>
    </alternativeName>
</protein>
<proteinExistence type="inferred from homology"/>
<name>TRUA_HELPG</name>
<reference key="1">
    <citation type="journal article" date="2009" name="J. Bacteriol.">
        <title>The complete genome sequence of Helicobacter pylori strain G27.</title>
        <authorList>
            <person name="Baltrus D.A."/>
            <person name="Amieva M.R."/>
            <person name="Covacci A."/>
            <person name="Lowe T.M."/>
            <person name="Merrell D.S."/>
            <person name="Ottemann K.M."/>
            <person name="Stein M."/>
            <person name="Salama N.R."/>
            <person name="Guillemin K."/>
        </authorList>
    </citation>
    <scope>NUCLEOTIDE SEQUENCE [LARGE SCALE GENOMIC DNA]</scope>
    <source>
        <strain>G27</strain>
    </source>
</reference>
<gene>
    <name evidence="1" type="primary">truA</name>
    <name type="ordered locus">HPG27_1035</name>
</gene>
<accession>B5Z889</accession>
<evidence type="ECO:0000255" key="1">
    <source>
        <dbReference type="HAMAP-Rule" id="MF_00171"/>
    </source>
</evidence>
<feature type="chain" id="PRO_1000097748" description="tRNA pseudouridine synthase A">
    <location>
        <begin position="1"/>
        <end position="242"/>
    </location>
</feature>
<feature type="active site" description="Nucleophile" evidence="1">
    <location>
        <position position="51"/>
    </location>
</feature>
<feature type="binding site" evidence="1">
    <location>
        <position position="107"/>
    </location>
    <ligand>
        <name>substrate</name>
    </ligand>
</feature>
<comment type="function">
    <text evidence="1">Formation of pseudouridine at positions 38, 39 and 40 in the anticodon stem and loop of transfer RNAs.</text>
</comment>
<comment type="catalytic activity">
    <reaction evidence="1">
        <text>uridine(38/39/40) in tRNA = pseudouridine(38/39/40) in tRNA</text>
        <dbReference type="Rhea" id="RHEA:22376"/>
        <dbReference type="Rhea" id="RHEA-COMP:10085"/>
        <dbReference type="Rhea" id="RHEA-COMP:10087"/>
        <dbReference type="ChEBI" id="CHEBI:65314"/>
        <dbReference type="ChEBI" id="CHEBI:65315"/>
        <dbReference type="EC" id="5.4.99.12"/>
    </reaction>
</comment>
<comment type="subunit">
    <text evidence="1">Homodimer.</text>
</comment>
<comment type="similarity">
    <text evidence="1">Belongs to the tRNA pseudouridine synthase TruA family.</text>
</comment>
<dbReference type="EC" id="5.4.99.12" evidence="1"/>
<dbReference type="EMBL" id="CP001173">
    <property type="protein sequence ID" value="ACI27788.1"/>
    <property type="molecule type" value="Genomic_DNA"/>
</dbReference>
<dbReference type="RefSeq" id="WP_001203304.1">
    <property type="nucleotide sequence ID" value="NC_011333.1"/>
</dbReference>
<dbReference type="SMR" id="B5Z889"/>
<dbReference type="KEGG" id="hpg:HPG27_1035"/>
<dbReference type="HOGENOM" id="CLU_014673_0_1_7"/>
<dbReference type="Proteomes" id="UP000001735">
    <property type="component" value="Chromosome"/>
</dbReference>
<dbReference type="GO" id="GO:0003723">
    <property type="term" value="F:RNA binding"/>
    <property type="evidence" value="ECO:0007669"/>
    <property type="project" value="InterPro"/>
</dbReference>
<dbReference type="GO" id="GO:0160147">
    <property type="term" value="F:tRNA pseudouridine(38-40) synthase activity"/>
    <property type="evidence" value="ECO:0007669"/>
    <property type="project" value="UniProtKB-EC"/>
</dbReference>
<dbReference type="GO" id="GO:0031119">
    <property type="term" value="P:tRNA pseudouridine synthesis"/>
    <property type="evidence" value="ECO:0007669"/>
    <property type="project" value="UniProtKB-UniRule"/>
</dbReference>
<dbReference type="CDD" id="cd02570">
    <property type="entry name" value="PseudoU_synth_EcTruA"/>
    <property type="match status" value="1"/>
</dbReference>
<dbReference type="FunFam" id="3.30.70.580:FF:000023">
    <property type="entry name" value="tRNA pseudouridine synthase A"/>
    <property type="match status" value="1"/>
</dbReference>
<dbReference type="FunFam" id="3.30.70.660:FF:000029">
    <property type="entry name" value="tRNA pseudouridine synthase A"/>
    <property type="match status" value="1"/>
</dbReference>
<dbReference type="Gene3D" id="3.30.70.660">
    <property type="entry name" value="Pseudouridine synthase I, catalytic domain, C-terminal subdomain"/>
    <property type="match status" value="1"/>
</dbReference>
<dbReference type="Gene3D" id="3.30.70.580">
    <property type="entry name" value="Pseudouridine synthase I, catalytic domain, N-terminal subdomain"/>
    <property type="match status" value="1"/>
</dbReference>
<dbReference type="HAMAP" id="MF_00171">
    <property type="entry name" value="TruA"/>
    <property type="match status" value="1"/>
</dbReference>
<dbReference type="InterPro" id="IPR020103">
    <property type="entry name" value="PsdUridine_synth_cat_dom_sf"/>
</dbReference>
<dbReference type="InterPro" id="IPR001406">
    <property type="entry name" value="PsdUridine_synth_TruA"/>
</dbReference>
<dbReference type="InterPro" id="IPR020097">
    <property type="entry name" value="PsdUridine_synth_TruA_a/b_dom"/>
</dbReference>
<dbReference type="InterPro" id="IPR020095">
    <property type="entry name" value="PsdUridine_synth_TruA_C"/>
</dbReference>
<dbReference type="InterPro" id="IPR020094">
    <property type="entry name" value="TruA/RsuA/RluB/E/F_N"/>
</dbReference>
<dbReference type="NCBIfam" id="TIGR00071">
    <property type="entry name" value="hisT_truA"/>
    <property type="match status" value="1"/>
</dbReference>
<dbReference type="PANTHER" id="PTHR11142">
    <property type="entry name" value="PSEUDOURIDYLATE SYNTHASE"/>
    <property type="match status" value="1"/>
</dbReference>
<dbReference type="PANTHER" id="PTHR11142:SF0">
    <property type="entry name" value="TRNA PSEUDOURIDINE SYNTHASE-LIKE 1"/>
    <property type="match status" value="1"/>
</dbReference>
<dbReference type="Pfam" id="PF01416">
    <property type="entry name" value="PseudoU_synth_1"/>
    <property type="match status" value="2"/>
</dbReference>
<dbReference type="PIRSF" id="PIRSF001430">
    <property type="entry name" value="tRNA_psdUrid_synth"/>
    <property type="match status" value="1"/>
</dbReference>
<dbReference type="SUPFAM" id="SSF55120">
    <property type="entry name" value="Pseudouridine synthase"/>
    <property type="match status" value="1"/>
</dbReference>
<sequence length="242" mass="27225">MRCFKATIAYDGAYFLGYAKQPNKLGVQDKIESALNALGIKSVVVAAGRTDKGVHANNQTLSFHAPKHWNAAKLFYCLAPKLAPHIVLKKLEEKNFHARFDAQKRAYRYLLTKNLKTPFLAPYIACGDYGSLDALNTALKQFTGKHDFSLFKKEGGATTNPKRAIFNAFAYKTFIIGHECVVFKIIGDAFLRSSVRLIIQACVQYSLEKITLAEIEMQIHNLKATIRTPIMANGLYLHRVYY</sequence>